<proteinExistence type="inferred from homology"/>
<feature type="chain" id="PRO_0000113807" description="Protein GrpE">
    <location>
        <begin position="1"/>
        <end position="191"/>
    </location>
</feature>
<feature type="region of interest" description="Disordered" evidence="2">
    <location>
        <begin position="1"/>
        <end position="40"/>
    </location>
</feature>
<feature type="compositionally biased region" description="Basic and acidic residues" evidence="2">
    <location>
        <begin position="1"/>
        <end position="13"/>
    </location>
</feature>
<feature type="compositionally biased region" description="Acidic residues" evidence="2">
    <location>
        <begin position="14"/>
        <end position="40"/>
    </location>
</feature>
<organism>
    <name type="scientific">Listeria innocua serovar 6a (strain ATCC BAA-680 / CLIP 11262)</name>
    <dbReference type="NCBI Taxonomy" id="272626"/>
    <lineage>
        <taxon>Bacteria</taxon>
        <taxon>Bacillati</taxon>
        <taxon>Bacillota</taxon>
        <taxon>Bacilli</taxon>
        <taxon>Bacillales</taxon>
        <taxon>Listeriaceae</taxon>
        <taxon>Listeria</taxon>
    </lineage>
</organism>
<sequence>MSEKKNKKEKLAEEIEQEELNSLDESVETVEEEATEETLTEEQAKILELENKLDEVENRYLRMQADFENVKKRHIADRDASQKYRSQSLAQDLLPALDSFEKALATTSDQEEVKQILKGMEMVYNQILVAFEKEGIEVIPAVGEQFDPNFHQAVMQDSDENAGSNEITAELQKGYKLKDRVIRPSMVKVNQ</sequence>
<dbReference type="EMBL" id="AL596168">
    <property type="protein sequence ID" value="CAC96742.1"/>
    <property type="molecule type" value="Genomic_DNA"/>
</dbReference>
<dbReference type="PIR" id="AF1621">
    <property type="entry name" value="AF1621"/>
</dbReference>
<dbReference type="RefSeq" id="WP_010991569.1">
    <property type="nucleotide sequence ID" value="NC_003212.1"/>
</dbReference>
<dbReference type="SMR" id="Q92BN7"/>
<dbReference type="STRING" id="272626.gene:17565842"/>
<dbReference type="KEGG" id="lin:grpE"/>
<dbReference type="eggNOG" id="COG0576">
    <property type="taxonomic scope" value="Bacteria"/>
</dbReference>
<dbReference type="HOGENOM" id="CLU_057217_5_2_9"/>
<dbReference type="OrthoDB" id="9812586at2"/>
<dbReference type="Proteomes" id="UP000002513">
    <property type="component" value="Chromosome"/>
</dbReference>
<dbReference type="GO" id="GO:0005737">
    <property type="term" value="C:cytoplasm"/>
    <property type="evidence" value="ECO:0007669"/>
    <property type="project" value="UniProtKB-SubCell"/>
</dbReference>
<dbReference type="GO" id="GO:0000774">
    <property type="term" value="F:adenyl-nucleotide exchange factor activity"/>
    <property type="evidence" value="ECO:0007669"/>
    <property type="project" value="InterPro"/>
</dbReference>
<dbReference type="GO" id="GO:0042803">
    <property type="term" value="F:protein homodimerization activity"/>
    <property type="evidence" value="ECO:0007669"/>
    <property type="project" value="InterPro"/>
</dbReference>
<dbReference type="GO" id="GO:0051087">
    <property type="term" value="F:protein-folding chaperone binding"/>
    <property type="evidence" value="ECO:0007669"/>
    <property type="project" value="InterPro"/>
</dbReference>
<dbReference type="GO" id="GO:0051082">
    <property type="term" value="F:unfolded protein binding"/>
    <property type="evidence" value="ECO:0007669"/>
    <property type="project" value="TreeGrafter"/>
</dbReference>
<dbReference type="GO" id="GO:0006457">
    <property type="term" value="P:protein folding"/>
    <property type="evidence" value="ECO:0007669"/>
    <property type="project" value="InterPro"/>
</dbReference>
<dbReference type="CDD" id="cd00446">
    <property type="entry name" value="GrpE"/>
    <property type="match status" value="1"/>
</dbReference>
<dbReference type="FunFam" id="2.30.22.10:FF:000001">
    <property type="entry name" value="Protein GrpE"/>
    <property type="match status" value="1"/>
</dbReference>
<dbReference type="FunFam" id="3.90.20.20:FF:000002">
    <property type="entry name" value="Protein GrpE"/>
    <property type="match status" value="1"/>
</dbReference>
<dbReference type="Gene3D" id="3.90.20.20">
    <property type="match status" value="1"/>
</dbReference>
<dbReference type="Gene3D" id="2.30.22.10">
    <property type="entry name" value="Head domain of nucleotide exchange factor GrpE"/>
    <property type="match status" value="1"/>
</dbReference>
<dbReference type="HAMAP" id="MF_01151">
    <property type="entry name" value="GrpE"/>
    <property type="match status" value="1"/>
</dbReference>
<dbReference type="InterPro" id="IPR000740">
    <property type="entry name" value="GrpE"/>
</dbReference>
<dbReference type="InterPro" id="IPR013805">
    <property type="entry name" value="GrpE_coiled_coil"/>
</dbReference>
<dbReference type="InterPro" id="IPR009012">
    <property type="entry name" value="GrpE_head"/>
</dbReference>
<dbReference type="NCBIfam" id="NF010738">
    <property type="entry name" value="PRK14140.1"/>
    <property type="match status" value="1"/>
</dbReference>
<dbReference type="PANTHER" id="PTHR21237">
    <property type="entry name" value="GRPE PROTEIN"/>
    <property type="match status" value="1"/>
</dbReference>
<dbReference type="PANTHER" id="PTHR21237:SF23">
    <property type="entry name" value="GRPE PROTEIN HOMOLOG, MITOCHONDRIAL"/>
    <property type="match status" value="1"/>
</dbReference>
<dbReference type="Pfam" id="PF01025">
    <property type="entry name" value="GrpE"/>
    <property type="match status" value="1"/>
</dbReference>
<dbReference type="PRINTS" id="PR00773">
    <property type="entry name" value="GRPEPROTEIN"/>
</dbReference>
<dbReference type="SUPFAM" id="SSF58014">
    <property type="entry name" value="Coiled-coil domain of nucleotide exchange factor GrpE"/>
    <property type="match status" value="1"/>
</dbReference>
<dbReference type="SUPFAM" id="SSF51064">
    <property type="entry name" value="Head domain of nucleotide exchange factor GrpE"/>
    <property type="match status" value="1"/>
</dbReference>
<dbReference type="PROSITE" id="PS01071">
    <property type="entry name" value="GRPE"/>
    <property type="match status" value="1"/>
</dbReference>
<accession>Q92BN7</accession>
<protein>
    <recommendedName>
        <fullName evidence="1">Protein GrpE</fullName>
    </recommendedName>
    <alternativeName>
        <fullName evidence="1">HSP-70 cofactor</fullName>
    </alternativeName>
</protein>
<comment type="function">
    <text evidence="1">Participates actively in the response to hyperosmotic and heat shock by preventing the aggregation of stress-denatured proteins, in association with DnaK and GrpE. It is the nucleotide exchange factor for DnaK and may function as a thermosensor. Unfolded proteins bind initially to DnaJ; upon interaction with the DnaJ-bound protein, DnaK hydrolyzes its bound ATP, resulting in the formation of a stable complex. GrpE releases ADP from DnaK; ATP binding to DnaK triggers the release of the substrate protein, thus completing the reaction cycle. Several rounds of ATP-dependent interactions between DnaJ, DnaK and GrpE are required for fully efficient folding.</text>
</comment>
<comment type="subunit">
    <text evidence="1">Homodimer.</text>
</comment>
<comment type="subcellular location">
    <subcellularLocation>
        <location evidence="1">Cytoplasm</location>
    </subcellularLocation>
</comment>
<comment type="similarity">
    <text evidence="1">Belongs to the GrpE family.</text>
</comment>
<gene>
    <name evidence="1" type="primary">grpE</name>
    <name type="ordered locus">lin1511</name>
</gene>
<name>GRPE_LISIN</name>
<reference key="1">
    <citation type="journal article" date="2001" name="Science">
        <title>Comparative genomics of Listeria species.</title>
        <authorList>
            <person name="Glaser P."/>
            <person name="Frangeul L."/>
            <person name="Buchrieser C."/>
            <person name="Rusniok C."/>
            <person name="Amend A."/>
            <person name="Baquero F."/>
            <person name="Berche P."/>
            <person name="Bloecker H."/>
            <person name="Brandt P."/>
            <person name="Chakraborty T."/>
            <person name="Charbit A."/>
            <person name="Chetouani F."/>
            <person name="Couve E."/>
            <person name="de Daruvar A."/>
            <person name="Dehoux P."/>
            <person name="Domann E."/>
            <person name="Dominguez-Bernal G."/>
            <person name="Duchaud E."/>
            <person name="Durant L."/>
            <person name="Dussurget O."/>
            <person name="Entian K.-D."/>
            <person name="Fsihi H."/>
            <person name="Garcia-del Portillo F."/>
            <person name="Garrido P."/>
            <person name="Gautier L."/>
            <person name="Goebel W."/>
            <person name="Gomez-Lopez N."/>
            <person name="Hain T."/>
            <person name="Hauf J."/>
            <person name="Jackson D."/>
            <person name="Jones L.-M."/>
            <person name="Kaerst U."/>
            <person name="Kreft J."/>
            <person name="Kuhn M."/>
            <person name="Kunst F."/>
            <person name="Kurapkat G."/>
            <person name="Madueno E."/>
            <person name="Maitournam A."/>
            <person name="Mata Vicente J."/>
            <person name="Ng E."/>
            <person name="Nedjari H."/>
            <person name="Nordsiek G."/>
            <person name="Novella S."/>
            <person name="de Pablos B."/>
            <person name="Perez-Diaz J.-C."/>
            <person name="Purcell R."/>
            <person name="Remmel B."/>
            <person name="Rose M."/>
            <person name="Schlueter T."/>
            <person name="Simoes N."/>
            <person name="Tierrez A."/>
            <person name="Vazquez-Boland J.-A."/>
            <person name="Voss H."/>
            <person name="Wehland J."/>
            <person name="Cossart P."/>
        </authorList>
    </citation>
    <scope>NUCLEOTIDE SEQUENCE [LARGE SCALE GENOMIC DNA]</scope>
    <source>
        <strain>ATCC BAA-680 / CLIP 11262</strain>
    </source>
</reference>
<keyword id="KW-0143">Chaperone</keyword>
<keyword id="KW-0963">Cytoplasm</keyword>
<keyword id="KW-0346">Stress response</keyword>
<evidence type="ECO:0000255" key="1">
    <source>
        <dbReference type="HAMAP-Rule" id="MF_01151"/>
    </source>
</evidence>
<evidence type="ECO:0000256" key="2">
    <source>
        <dbReference type="SAM" id="MobiDB-lite"/>
    </source>
</evidence>